<feature type="chain" id="PRO_0000335775" description="Pyridoxine/pyridoxamine 5'-phosphate oxidase">
    <location>
        <begin position="1"/>
        <end position="219"/>
    </location>
</feature>
<feature type="binding site" evidence="1">
    <location>
        <begin position="15"/>
        <end position="18"/>
    </location>
    <ligand>
        <name>substrate</name>
    </ligand>
</feature>
<feature type="binding site" evidence="1">
    <location>
        <begin position="68"/>
        <end position="73"/>
    </location>
    <ligand>
        <name>FMN</name>
        <dbReference type="ChEBI" id="CHEBI:58210"/>
    </ligand>
</feature>
<feature type="binding site" evidence="1">
    <location>
        <position position="73"/>
    </location>
    <ligand>
        <name>substrate</name>
    </ligand>
</feature>
<feature type="binding site" evidence="1">
    <location>
        <begin position="83"/>
        <end position="84"/>
    </location>
    <ligand>
        <name>FMN</name>
        <dbReference type="ChEBI" id="CHEBI:58210"/>
    </ligand>
</feature>
<feature type="binding site" evidence="1">
    <location>
        <position position="89"/>
    </location>
    <ligand>
        <name>FMN</name>
        <dbReference type="ChEBI" id="CHEBI:58210"/>
    </ligand>
</feature>
<feature type="binding site" evidence="1">
    <location>
        <position position="90"/>
    </location>
    <ligand>
        <name>FMN</name>
        <dbReference type="ChEBI" id="CHEBI:58210"/>
    </ligand>
</feature>
<feature type="binding site" evidence="1">
    <location>
        <position position="112"/>
    </location>
    <ligand>
        <name>FMN</name>
        <dbReference type="ChEBI" id="CHEBI:58210"/>
    </ligand>
</feature>
<feature type="binding site" evidence="1">
    <location>
        <position position="130"/>
    </location>
    <ligand>
        <name>substrate</name>
    </ligand>
</feature>
<feature type="binding site" evidence="1">
    <location>
        <position position="134"/>
    </location>
    <ligand>
        <name>substrate</name>
    </ligand>
</feature>
<feature type="binding site" evidence="1">
    <location>
        <position position="138"/>
    </location>
    <ligand>
        <name>substrate</name>
    </ligand>
</feature>
<feature type="binding site" evidence="1">
    <location>
        <begin position="147"/>
        <end position="148"/>
    </location>
    <ligand>
        <name>FMN</name>
        <dbReference type="ChEBI" id="CHEBI:58210"/>
    </ligand>
</feature>
<feature type="binding site" evidence="1">
    <location>
        <position position="192"/>
    </location>
    <ligand>
        <name>FMN</name>
        <dbReference type="ChEBI" id="CHEBI:58210"/>
    </ligand>
</feature>
<feature type="binding site" evidence="1">
    <location>
        <begin position="198"/>
        <end position="200"/>
    </location>
    <ligand>
        <name>substrate</name>
    </ligand>
</feature>
<feature type="binding site" evidence="1">
    <location>
        <position position="202"/>
    </location>
    <ligand>
        <name>FMN</name>
        <dbReference type="ChEBI" id="CHEBI:58210"/>
    </ligand>
</feature>
<evidence type="ECO:0000255" key="1">
    <source>
        <dbReference type="HAMAP-Rule" id="MF_01629"/>
    </source>
</evidence>
<accession>B0C079</accession>
<comment type="function">
    <text evidence="1">Catalyzes the oxidation of either pyridoxine 5'-phosphate (PNP) or pyridoxamine 5'-phosphate (PMP) into pyridoxal 5'-phosphate (PLP).</text>
</comment>
<comment type="catalytic activity">
    <reaction evidence="1">
        <text>pyridoxamine 5'-phosphate + O2 + H2O = pyridoxal 5'-phosphate + H2O2 + NH4(+)</text>
        <dbReference type="Rhea" id="RHEA:15817"/>
        <dbReference type="ChEBI" id="CHEBI:15377"/>
        <dbReference type="ChEBI" id="CHEBI:15379"/>
        <dbReference type="ChEBI" id="CHEBI:16240"/>
        <dbReference type="ChEBI" id="CHEBI:28938"/>
        <dbReference type="ChEBI" id="CHEBI:58451"/>
        <dbReference type="ChEBI" id="CHEBI:597326"/>
        <dbReference type="EC" id="1.4.3.5"/>
    </reaction>
</comment>
<comment type="catalytic activity">
    <reaction evidence="1">
        <text>pyridoxine 5'-phosphate + O2 = pyridoxal 5'-phosphate + H2O2</text>
        <dbReference type="Rhea" id="RHEA:15149"/>
        <dbReference type="ChEBI" id="CHEBI:15379"/>
        <dbReference type="ChEBI" id="CHEBI:16240"/>
        <dbReference type="ChEBI" id="CHEBI:58589"/>
        <dbReference type="ChEBI" id="CHEBI:597326"/>
        <dbReference type="EC" id="1.4.3.5"/>
    </reaction>
</comment>
<comment type="cofactor">
    <cofactor evidence="1">
        <name>FMN</name>
        <dbReference type="ChEBI" id="CHEBI:58210"/>
    </cofactor>
    <text evidence="1">Binds 1 FMN per subunit.</text>
</comment>
<comment type="pathway">
    <text evidence="1">Cofactor metabolism; pyridoxal 5'-phosphate salvage; pyridoxal 5'-phosphate from pyridoxamine 5'-phosphate: step 1/1.</text>
</comment>
<comment type="pathway">
    <text evidence="1">Cofactor metabolism; pyridoxal 5'-phosphate salvage; pyridoxal 5'-phosphate from pyridoxine 5'-phosphate: step 1/1.</text>
</comment>
<comment type="subunit">
    <text evidence="1">Homodimer.</text>
</comment>
<comment type="similarity">
    <text evidence="1">Belongs to the pyridoxamine 5'-phosphate oxidase family.</text>
</comment>
<reference key="1">
    <citation type="journal article" date="2008" name="Proc. Natl. Acad. Sci. U.S.A.">
        <title>Niche adaptation and genome expansion in the chlorophyll d-producing cyanobacterium Acaryochloris marina.</title>
        <authorList>
            <person name="Swingley W.D."/>
            <person name="Chen M."/>
            <person name="Cheung P.C."/>
            <person name="Conrad A.L."/>
            <person name="Dejesa L.C."/>
            <person name="Hao J."/>
            <person name="Honchak B.M."/>
            <person name="Karbach L.E."/>
            <person name="Kurdoglu A."/>
            <person name="Lahiri S."/>
            <person name="Mastrian S.D."/>
            <person name="Miyashita H."/>
            <person name="Page L."/>
            <person name="Ramakrishna P."/>
            <person name="Satoh S."/>
            <person name="Sattley W.M."/>
            <person name="Shimada Y."/>
            <person name="Taylor H.L."/>
            <person name="Tomo T."/>
            <person name="Tsuchiya T."/>
            <person name="Wang Z.T."/>
            <person name="Raymond J."/>
            <person name="Mimuro M."/>
            <person name="Blankenship R.E."/>
            <person name="Touchman J.W."/>
        </authorList>
    </citation>
    <scope>NUCLEOTIDE SEQUENCE [LARGE SCALE GENOMIC DNA]</scope>
    <source>
        <strain>MBIC 11017</strain>
    </source>
</reference>
<name>PDXH_ACAM1</name>
<keyword id="KW-0285">Flavoprotein</keyword>
<keyword id="KW-0288">FMN</keyword>
<keyword id="KW-0560">Oxidoreductase</keyword>
<keyword id="KW-0664">Pyridoxine biosynthesis</keyword>
<keyword id="KW-1185">Reference proteome</keyword>
<protein>
    <recommendedName>
        <fullName evidence="1">Pyridoxine/pyridoxamine 5'-phosphate oxidase</fullName>
        <ecNumber evidence="1">1.4.3.5</ecNumber>
    </recommendedName>
    <alternativeName>
        <fullName evidence="1">PNP/PMP oxidase</fullName>
        <shortName evidence="1">PNPOx</shortName>
    </alternativeName>
    <alternativeName>
        <fullName evidence="1">Pyridoxal 5'-phosphate synthase</fullName>
    </alternativeName>
</protein>
<sequence length="219" mass="25529">MSLIDPTQTSISDLRRDYRQQALLETEVNANPILQFQSWFEQAVQAELPEPNAMTLATVSADSQPSARMVLLKGFDQQGFIFYTNYLSRKGQDLAQRPWAALVFWWAELERQVRIEGKVVKVSDSETKAYFESRPRGSQLGAWASDQSQVIGDRDILDQRLQALEQKYQNQPIPRPPHWGGYRVTPHLIEFWQGRTSRLHDRLCYRYSDQEWILERLSP</sequence>
<dbReference type="EC" id="1.4.3.5" evidence="1"/>
<dbReference type="EMBL" id="CP000828">
    <property type="protein sequence ID" value="ABW29571.1"/>
    <property type="molecule type" value="Genomic_DNA"/>
</dbReference>
<dbReference type="RefSeq" id="WP_012164875.1">
    <property type="nucleotide sequence ID" value="NC_009925.1"/>
</dbReference>
<dbReference type="SMR" id="B0C079"/>
<dbReference type="STRING" id="329726.AM1_4597"/>
<dbReference type="KEGG" id="amr:AM1_4597"/>
<dbReference type="eggNOG" id="COG0259">
    <property type="taxonomic scope" value="Bacteria"/>
</dbReference>
<dbReference type="HOGENOM" id="CLU_032263_2_2_3"/>
<dbReference type="OrthoDB" id="9780392at2"/>
<dbReference type="UniPathway" id="UPA01068">
    <property type="reaction ID" value="UER00304"/>
</dbReference>
<dbReference type="UniPathway" id="UPA01068">
    <property type="reaction ID" value="UER00305"/>
</dbReference>
<dbReference type="Proteomes" id="UP000000268">
    <property type="component" value="Chromosome"/>
</dbReference>
<dbReference type="GO" id="GO:0010181">
    <property type="term" value="F:FMN binding"/>
    <property type="evidence" value="ECO:0007669"/>
    <property type="project" value="UniProtKB-UniRule"/>
</dbReference>
<dbReference type="GO" id="GO:0004733">
    <property type="term" value="F:pyridoxamine phosphate oxidase activity"/>
    <property type="evidence" value="ECO:0007669"/>
    <property type="project" value="UniProtKB-UniRule"/>
</dbReference>
<dbReference type="GO" id="GO:0008615">
    <property type="term" value="P:pyridoxine biosynthetic process"/>
    <property type="evidence" value="ECO:0007669"/>
    <property type="project" value="UniProtKB-KW"/>
</dbReference>
<dbReference type="FunFam" id="2.30.110.10:FF:000005">
    <property type="entry name" value="NAD(P)H-hydrate epimerase"/>
    <property type="match status" value="1"/>
</dbReference>
<dbReference type="Gene3D" id="2.30.110.10">
    <property type="entry name" value="Electron Transport, Fmn-binding Protein, Chain A"/>
    <property type="match status" value="1"/>
</dbReference>
<dbReference type="HAMAP" id="MF_01629">
    <property type="entry name" value="PdxH"/>
    <property type="match status" value="1"/>
</dbReference>
<dbReference type="InterPro" id="IPR000659">
    <property type="entry name" value="Pyridox_Oxase"/>
</dbReference>
<dbReference type="InterPro" id="IPR019740">
    <property type="entry name" value="Pyridox_Oxase_CS"/>
</dbReference>
<dbReference type="InterPro" id="IPR011576">
    <property type="entry name" value="Pyridox_Oxase_N"/>
</dbReference>
<dbReference type="InterPro" id="IPR019576">
    <property type="entry name" value="Pyridoxamine_oxidase_dimer_C"/>
</dbReference>
<dbReference type="InterPro" id="IPR012349">
    <property type="entry name" value="Split_barrel_FMN-bd"/>
</dbReference>
<dbReference type="NCBIfam" id="TIGR00558">
    <property type="entry name" value="pdxH"/>
    <property type="match status" value="1"/>
</dbReference>
<dbReference type="NCBIfam" id="NF004231">
    <property type="entry name" value="PRK05679.1"/>
    <property type="match status" value="1"/>
</dbReference>
<dbReference type="PANTHER" id="PTHR10851:SF0">
    <property type="entry name" value="PYRIDOXINE-5'-PHOSPHATE OXIDASE"/>
    <property type="match status" value="1"/>
</dbReference>
<dbReference type="PANTHER" id="PTHR10851">
    <property type="entry name" value="PYRIDOXINE-5-PHOSPHATE OXIDASE"/>
    <property type="match status" value="1"/>
</dbReference>
<dbReference type="Pfam" id="PF10590">
    <property type="entry name" value="PNP_phzG_C"/>
    <property type="match status" value="1"/>
</dbReference>
<dbReference type="Pfam" id="PF01243">
    <property type="entry name" value="PNPOx_N"/>
    <property type="match status" value="1"/>
</dbReference>
<dbReference type="PIRSF" id="PIRSF000190">
    <property type="entry name" value="Pyd_amn-ph_oxd"/>
    <property type="match status" value="1"/>
</dbReference>
<dbReference type="SUPFAM" id="SSF50475">
    <property type="entry name" value="FMN-binding split barrel"/>
    <property type="match status" value="1"/>
</dbReference>
<dbReference type="PROSITE" id="PS01064">
    <property type="entry name" value="PYRIDOX_OXIDASE"/>
    <property type="match status" value="1"/>
</dbReference>
<gene>
    <name evidence="1" type="primary">pdxH</name>
    <name type="ordered locus">AM1_4597</name>
</gene>
<proteinExistence type="inferred from homology"/>
<organism>
    <name type="scientific">Acaryochloris marina (strain MBIC 11017)</name>
    <dbReference type="NCBI Taxonomy" id="329726"/>
    <lineage>
        <taxon>Bacteria</taxon>
        <taxon>Bacillati</taxon>
        <taxon>Cyanobacteriota</taxon>
        <taxon>Cyanophyceae</taxon>
        <taxon>Acaryochloridales</taxon>
        <taxon>Acaryochloridaceae</taxon>
        <taxon>Acaryochloris</taxon>
    </lineage>
</organism>